<gene>
    <name type="primary">motA</name>
</gene>
<proteinExistence type="inferred from homology"/>
<sequence>MDIAAAIGLIGAIVMVVGSMIYAGGVAPFVDIPSLVIVVAGTAFIVLAMKPLPVFLGHFKAMMKVFKPSRFDMNEVISTMVELSNLARKDGIMALEGKAVPDAFFEKGLQLLVDGTDEAKLVKQLKYEIKAMKARHEAYQGAVKAWIDIGPAMGMVGTLIGLVLMLGNMSDPKSIGPAMAVALLTTLYGALMANVIFAPILNKLEGYSADEVTYRELVIEGLRGIARGESARMIEDQMVCALDRKQQMKRKAA</sequence>
<accession>Q53174</accession>
<evidence type="ECO:0000250" key="1"/>
<evidence type="ECO:0000255" key="2"/>
<evidence type="ECO:0000305" key="3"/>
<name>MOTA_CERSP</name>
<organism>
    <name type="scientific">Cereibacter sphaeroides</name>
    <name type="common">Rhodobacter sphaeroides</name>
    <dbReference type="NCBI Taxonomy" id="1063"/>
    <lineage>
        <taxon>Bacteria</taxon>
        <taxon>Pseudomonadati</taxon>
        <taxon>Pseudomonadota</taxon>
        <taxon>Alphaproteobacteria</taxon>
        <taxon>Rhodobacterales</taxon>
        <taxon>Paracoccaceae</taxon>
        <taxon>Cereibacter</taxon>
    </lineage>
</organism>
<comment type="function">
    <text evidence="1">MotA and MotB comprise the stator element of the flagellar motor complex. Required for rotation of the flagellar motor. Probable transmembrane proton channel (By similarity).</text>
</comment>
<comment type="subunit">
    <text evidence="1">Each stator complex is composed of 4 MotA and 2 MotB subunits. 2 A subunits and 1 B subunit are thought to form a single ion channel, so that each stator complex contains two channels (By similarity).</text>
</comment>
<comment type="subcellular location">
    <subcellularLocation>
        <location evidence="1">Cell inner membrane</location>
        <topology evidence="3">Multi-pass membrane protein</topology>
    </subcellularLocation>
</comment>
<comment type="similarity">
    <text evidence="3">Belongs to the MotA family.</text>
</comment>
<feature type="chain" id="PRO_0000189577" description="Motility protein A">
    <location>
        <begin position="1"/>
        <end position="253"/>
    </location>
</feature>
<feature type="transmembrane region" description="Helical" evidence="2">
    <location>
        <begin position="3"/>
        <end position="23"/>
    </location>
</feature>
<feature type="transmembrane region" description="Helical" evidence="2">
    <location>
        <begin position="29"/>
        <end position="49"/>
    </location>
</feature>
<feature type="transmembrane region" description="Helical" evidence="2">
    <location>
        <begin position="146"/>
        <end position="166"/>
    </location>
</feature>
<feature type="transmembrane region" description="Helical" evidence="2">
    <location>
        <begin position="181"/>
        <end position="201"/>
    </location>
</feature>
<feature type="topological domain" description="Cytoplasmic" evidence="2">
    <location>
        <begin position="202"/>
        <end position="253"/>
    </location>
</feature>
<protein>
    <recommendedName>
        <fullName>Motility protein A</fullName>
    </recommendedName>
    <alternativeName>
        <fullName>Chemotaxis protein MotA</fullName>
    </alternativeName>
</protein>
<dbReference type="EMBL" id="X85986">
    <property type="protein sequence ID" value="CAA59974.1"/>
    <property type="molecule type" value="Genomic_DNA"/>
</dbReference>
<dbReference type="PIR" id="S70170">
    <property type="entry name" value="S70170"/>
</dbReference>
<dbReference type="SMR" id="Q53174"/>
<dbReference type="GO" id="GO:0005886">
    <property type="term" value="C:plasma membrane"/>
    <property type="evidence" value="ECO:0007669"/>
    <property type="project" value="UniProtKB-SubCell"/>
</dbReference>
<dbReference type="GO" id="GO:0071978">
    <property type="term" value="P:bacterial-type flagellum-dependent swarming motility"/>
    <property type="evidence" value="ECO:0007669"/>
    <property type="project" value="InterPro"/>
</dbReference>
<dbReference type="GO" id="GO:0006935">
    <property type="term" value="P:chemotaxis"/>
    <property type="evidence" value="ECO:0007669"/>
    <property type="project" value="UniProtKB-KW"/>
</dbReference>
<dbReference type="GO" id="GO:1902600">
    <property type="term" value="P:proton transmembrane transport"/>
    <property type="evidence" value="ECO:0007669"/>
    <property type="project" value="UniProtKB-KW"/>
</dbReference>
<dbReference type="InterPro" id="IPR000540">
    <property type="entry name" value="Flag_MotA_CS"/>
</dbReference>
<dbReference type="InterPro" id="IPR047055">
    <property type="entry name" value="MotA-like"/>
</dbReference>
<dbReference type="InterPro" id="IPR002898">
    <property type="entry name" value="MotA_ExbB_proton_chnl"/>
</dbReference>
<dbReference type="PANTHER" id="PTHR30433">
    <property type="entry name" value="CHEMOTAXIS PROTEIN MOTA"/>
    <property type="match status" value="1"/>
</dbReference>
<dbReference type="PANTHER" id="PTHR30433:SF2">
    <property type="entry name" value="MOTILITY PROTEIN A"/>
    <property type="match status" value="1"/>
</dbReference>
<dbReference type="Pfam" id="PF01618">
    <property type="entry name" value="MotA_ExbB"/>
    <property type="match status" value="1"/>
</dbReference>
<dbReference type="PROSITE" id="PS01307">
    <property type="entry name" value="MOTA"/>
    <property type="match status" value="1"/>
</dbReference>
<reference key="1">
    <citation type="journal article" date="1995" name="Mol. Microbiol.">
        <title>Analysis of the motA flagellar motor gene from Rhodobacter sphaeroides, a bacterium with a unidirectional, stop-start flagellum.</title>
        <authorList>
            <person name="Shah D.S.H."/>
            <person name="Sockett R.E."/>
        </authorList>
    </citation>
    <scope>NUCLEOTIDE SEQUENCE [GENOMIC DNA]</scope>
    <source>
        <strain>WS8</strain>
    </source>
</reference>
<keyword id="KW-0997">Cell inner membrane</keyword>
<keyword id="KW-1003">Cell membrane</keyword>
<keyword id="KW-0145">Chemotaxis</keyword>
<keyword id="KW-0283">Flagellar rotation</keyword>
<keyword id="KW-0375">Hydrogen ion transport</keyword>
<keyword id="KW-0406">Ion transport</keyword>
<keyword id="KW-0472">Membrane</keyword>
<keyword id="KW-0812">Transmembrane</keyword>
<keyword id="KW-1133">Transmembrane helix</keyword>
<keyword id="KW-0813">Transport</keyword>